<gene>
    <name type="primary">LSM8</name>
</gene>
<accession>O95777</accession>
<reference key="1">
    <citation type="journal article" date="1999" name="EMBO J.">
        <title>A doughnut-shaped heteromer of human Sm-like proteins binds to the 3'-end of U6 snRNA, thereby facilitating U4/U6 duplex formation in vitro.</title>
        <authorList>
            <person name="Achsel T."/>
            <person name="Brahms H."/>
            <person name="Kastner B."/>
            <person name="Bachi A."/>
            <person name="Wilm M."/>
            <person name="Luehrmann R."/>
        </authorList>
    </citation>
    <scope>NUCLEOTIDE SEQUENCE [MRNA]</scope>
    <scope>PARTIAL PROTEIN SEQUENCE</scope>
    <scope>SUBUNIT</scope>
    <scope>FUNCTION</scope>
    <scope>SUBCELLULAR LOCATION</scope>
</reference>
<reference key="2">
    <citation type="journal article" date="2003" name="Nature">
        <title>The DNA sequence of human chromosome 7.</title>
        <authorList>
            <person name="Hillier L.W."/>
            <person name="Fulton R.S."/>
            <person name="Fulton L.A."/>
            <person name="Graves T.A."/>
            <person name="Pepin K.H."/>
            <person name="Wagner-McPherson C."/>
            <person name="Layman D."/>
            <person name="Maas J."/>
            <person name="Jaeger S."/>
            <person name="Walker R."/>
            <person name="Wylie K."/>
            <person name="Sekhon M."/>
            <person name="Becker M.C."/>
            <person name="O'Laughlin M.D."/>
            <person name="Schaller M.E."/>
            <person name="Fewell G.A."/>
            <person name="Delehaunty K.D."/>
            <person name="Miner T.L."/>
            <person name="Nash W.E."/>
            <person name="Cordes M."/>
            <person name="Du H."/>
            <person name="Sun H."/>
            <person name="Edwards J."/>
            <person name="Bradshaw-Cordum H."/>
            <person name="Ali J."/>
            <person name="Andrews S."/>
            <person name="Isak A."/>
            <person name="Vanbrunt A."/>
            <person name="Nguyen C."/>
            <person name="Du F."/>
            <person name="Lamar B."/>
            <person name="Courtney L."/>
            <person name="Kalicki J."/>
            <person name="Ozersky P."/>
            <person name="Bielicki L."/>
            <person name="Scott K."/>
            <person name="Holmes A."/>
            <person name="Harkins R."/>
            <person name="Harris A."/>
            <person name="Strong C.M."/>
            <person name="Hou S."/>
            <person name="Tomlinson C."/>
            <person name="Dauphin-Kohlberg S."/>
            <person name="Kozlowicz-Reilly A."/>
            <person name="Leonard S."/>
            <person name="Rohlfing T."/>
            <person name="Rock S.M."/>
            <person name="Tin-Wollam A.-M."/>
            <person name="Abbott A."/>
            <person name="Minx P."/>
            <person name="Maupin R."/>
            <person name="Strowmatt C."/>
            <person name="Latreille P."/>
            <person name="Miller N."/>
            <person name="Johnson D."/>
            <person name="Murray J."/>
            <person name="Woessner J.P."/>
            <person name="Wendl M.C."/>
            <person name="Yang S.-P."/>
            <person name="Schultz B.R."/>
            <person name="Wallis J.W."/>
            <person name="Spieth J."/>
            <person name="Bieri T.A."/>
            <person name="Nelson J.O."/>
            <person name="Berkowicz N."/>
            <person name="Wohldmann P.E."/>
            <person name="Cook L.L."/>
            <person name="Hickenbotham M.T."/>
            <person name="Eldred J."/>
            <person name="Williams D."/>
            <person name="Bedell J.A."/>
            <person name="Mardis E.R."/>
            <person name="Clifton S.W."/>
            <person name="Chissoe S.L."/>
            <person name="Marra M.A."/>
            <person name="Raymond C."/>
            <person name="Haugen E."/>
            <person name="Gillett W."/>
            <person name="Zhou Y."/>
            <person name="James R."/>
            <person name="Phelps K."/>
            <person name="Iadanoto S."/>
            <person name="Bubb K."/>
            <person name="Simms E."/>
            <person name="Levy R."/>
            <person name="Clendenning J."/>
            <person name="Kaul R."/>
            <person name="Kent W.J."/>
            <person name="Furey T.S."/>
            <person name="Baertsch R.A."/>
            <person name="Brent M.R."/>
            <person name="Keibler E."/>
            <person name="Flicek P."/>
            <person name="Bork P."/>
            <person name="Suyama M."/>
            <person name="Bailey J.A."/>
            <person name="Portnoy M.E."/>
            <person name="Torrents D."/>
            <person name="Chinwalla A.T."/>
            <person name="Gish W.R."/>
            <person name="Eddy S.R."/>
            <person name="McPherson J.D."/>
            <person name="Olson M.V."/>
            <person name="Eichler E.E."/>
            <person name="Green E.D."/>
            <person name="Waterston R.H."/>
            <person name="Wilson R.K."/>
        </authorList>
    </citation>
    <scope>NUCLEOTIDE SEQUENCE [LARGE SCALE GENOMIC DNA]</scope>
</reference>
<reference key="3">
    <citation type="journal article" date="2004" name="Genome Res.">
        <title>The status, quality, and expansion of the NIH full-length cDNA project: the Mammalian Gene Collection (MGC).</title>
        <authorList>
            <consortium name="The MGC Project Team"/>
        </authorList>
    </citation>
    <scope>NUCLEOTIDE SEQUENCE [LARGE SCALE MRNA]</scope>
    <source>
        <tissue>Brain</tissue>
        <tissue>Uterus</tissue>
    </source>
</reference>
<reference key="4">
    <citation type="submission" date="2005-07" db="UniProtKB">
        <authorList>
            <person name="Bienvenut W.V."/>
        </authorList>
    </citation>
    <scope>PROTEIN SEQUENCE OF 2-11; 29-44 AND 88-96</scope>
    <scope>CLEAVAGE OF INITIATOR METHIONINE</scope>
    <scope>ACETYLATION AT THR-2</scope>
    <scope>IDENTIFICATION BY MASS SPECTROMETRY</scope>
    <source>
        <tissue>B-cell lymphoma</tissue>
    </source>
</reference>
<reference key="5">
    <citation type="journal article" date="2011" name="BMC Syst. Biol.">
        <title>Initial characterization of the human central proteome.</title>
        <authorList>
            <person name="Burkard T.R."/>
            <person name="Planyavsky M."/>
            <person name="Kaupe I."/>
            <person name="Breitwieser F.P."/>
            <person name="Buerckstuemmer T."/>
            <person name="Bennett K.L."/>
            <person name="Superti-Furga G."/>
            <person name="Colinge J."/>
        </authorList>
    </citation>
    <scope>IDENTIFICATION BY MASS SPECTROMETRY [LARGE SCALE ANALYSIS]</scope>
</reference>
<reference key="6">
    <citation type="journal article" date="2012" name="Mol. Cell. Proteomics">
        <title>Comparative large-scale characterisation of plant vs. mammal proteins reveals similar and idiosyncratic N-alpha acetylation features.</title>
        <authorList>
            <person name="Bienvenut W.V."/>
            <person name="Sumpton D."/>
            <person name="Martinez A."/>
            <person name="Lilla S."/>
            <person name="Espagne C."/>
            <person name="Meinnel T."/>
            <person name="Giglione C."/>
        </authorList>
    </citation>
    <scope>ACETYLATION [LARGE SCALE ANALYSIS] AT THR-2</scope>
    <scope>CLEAVAGE OF INITIATOR METHIONINE [LARGE SCALE ANALYSIS]</scope>
    <scope>IDENTIFICATION BY MASS SPECTROMETRY [LARGE SCALE ANALYSIS]</scope>
</reference>
<reference key="7">
    <citation type="journal article" date="2012" name="Proc. Natl. Acad. Sci. U.S.A.">
        <title>N-terminal acetylome analyses and functional insights of the N-terminal acetyltransferase NatB.</title>
        <authorList>
            <person name="Van Damme P."/>
            <person name="Lasa M."/>
            <person name="Polevoda B."/>
            <person name="Gazquez C."/>
            <person name="Elosegui-Artola A."/>
            <person name="Kim D.S."/>
            <person name="De Juan-Pardo E."/>
            <person name="Demeyer K."/>
            <person name="Hole K."/>
            <person name="Larrea E."/>
            <person name="Timmerman E."/>
            <person name="Prieto J."/>
            <person name="Arnesen T."/>
            <person name="Sherman F."/>
            <person name="Gevaert K."/>
            <person name="Aldabe R."/>
        </authorList>
    </citation>
    <scope>ACETYLATION [LARGE SCALE ANALYSIS] AT THR-2</scope>
    <scope>CLEAVAGE OF INITIATOR METHIONINE [LARGE SCALE ANALYSIS]</scope>
    <scope>IDENTIFICATION BY MASS SPECTROMETRY [LARGE SCALE ANALYSIS]</scope>
</reference>
<reference key="8">
    <citation type="journal article" date="2014" name="J. Proteomics">
        <title>An enzyme assisted RP-RPLC approach for in-depth analysis of human liver phosphoproteome.</title>
        <authorList>
            <person name="Bian Y."/>
            <person name="Song C."/>
            <person name="Cheng K."/>
            <person name="Dong M."/>
            <person name="Wang F."/>
            <person name="Huang J."/>
            <person name="Sun D."/>
            <person name="Wang L."/>
            <person name="Ye M."/>
            <person name="Zou H."/>
        </authorList>
    </citation>
    <scope>IDENTIFICATION BY MASS SPECTROMETRY [LARGE SCALE ANALYSIS]</scope>
    <source>
        <tissue>Liver</tissue>
    </source>
</reference>
<reference evidence="7" key="9">
    <citation type="journal article" date="2016" name="Science">
        <title>Molecular architecture of the human U4/U6.U5 tri-snRNP.</title>
        <authorList>
            <person name="Agafonov D.E."/>
            <person name="Kastner B."/>
            <person name="Dybkov O."/>
            <person name="Hofele R.V."/>
            <person name="Liu W.T."/>
            <person name="Urlaub H."/>
            <person name="Luhrmann R."/>
            <person name="Stark H."/>
        </authorList>
    </citation>
    <scope>STRUCTURE BY ELECTRON MICROSCOPY (7.00 ANGSTROMS)</scope>
    <scope>SUBCELLULAR LOCATION</scope>
    <scope>SUBUNIT</scope>
    <scope>IDENTIFICATION BY MASS SPECTROMETRY</scope>
</reference>
<reference evidence="8" key="10">
    <citation type="journal article" date="2017" name="Cell">
        <title>Cryo-EM Structure of a Pre-catalytic Human Spliceosome Primed for Activation.</title>
        <authorList>
            <person name="Bertram K."/>
            <person name="Agafonov D.E."/>
            <person name="Dybkov O."/>
            <person name="Haselbach D."/>
            <person name="Leelaram M.N."/>
            <person name="Will C.L."/>
            <person name="Urlaub H."/>
            <person name="Kastner B."/>
            <person name="Luhrmann R."/>
            <person name="Stark H."/>
        </authorList>
    </citation>
    <scope>STRUCTURE BY ELECTRON MICROSCOPY (4.50 ANGSTROMS)</scope>
    <scope>FUNCTION</scope>
    <scope>SUBCELLULAR LOCATION</scope>
    <scope>SUBUNIT</scope>
    <scope>IDENTIFICATION BY MASS SPECTROMETRY</scope>
</reference>
<organism>
    <name type="scientific">Homo sapiens</name>
    <name type="common">Human</name>
    <dbReference type="NCBI Taxonomy" id="9606"/>
    <lineage>
        <taxon>Eukaryota</taxon>
        <taxon>Metazoa</taxon>
        <taxon>Chordata</taxon>
        <taxon>Craniata</taxon>
        <taxon>Vertebrata</taxon>
        <taxon>Euteleostomi</taxon>
        <taxon>Mammalia</taxon>
        <taxon>Eutheria</taxon>
        <taxon>Euarchontoglires</taxon>
        <taxon>Primates</taxon>
        <taxon>Haplorrhini</taxon>
        <taxon>Catarrhini</taxon>
        <taxon>Hominidae</taxon>
        <taxon>Homo</taxon>
    </lineage>
</organism>
<name>LSM8_HUMAN</name>
<protein>
    <recommendedName>
        <fullName>U6 snRNA-associated Sm-like protein LSm8</fullName>
    </recommendedName>
</protein>
<keyword id="KW-0002">3D-structure</keyword>
<keyword id="KW-0007">Acetylation</keyword>
<keyword id="KW-0903">Direct protein sequencing</keyword>
<keyword id="KW-0507">mRNA processing</keyword>
<keyword id="KW-0508">mRNA splicing</keyword>
<keyword id="KW-0539">Nucleus</keyword>
<keyword id="KW-1267">Proteomics identification</keyword>
<keyword id="KW-1185">Reference proteome</keyword>
<keyword id="KW-0687">Ribonucleoprotein</keyword>
<keyword id="KW-0694">RNA-binding</keyword>
<keyword id="KW-0747">Spliceosome</keyword>
<comment type="function">
    <text evidence="2 4">Plays a role in pre-mRNA splicing as component of the U4/U6-U5 tri-snRNP complex that is involved in spliceosome assembly, and as component of the precatalytic spliceosome (spliceosome B complex) (PubMed:28781166). The heptameric LSM2-8 complex binds specifically to the 3'-terminal U-tract of U6 snRNA (PubMed:10523320).</text>
</comment>
<comment type="subunit">
    <text evidence="2 3 4">Component of the precatalytic spliceosome (spliceosome B complex) (PubMed:28781166). Component of the U4/U6-U5 tri-snRNP complex, a building block of the precatalytic spliceosome (spliceosome B complex) (PubMed:10523320, PubMed:26912367, PubMed:28781166). The U4/U6-U5 tri-snRNP complex is composed of the U4, U6 and U5 snRNAs and at least PRPF3, PRPF4, PRPF6, PRPF8, PRPF31, SNRNP200, TXNL4A, SNRNP40, SNRPB, SNRPD1, SNRPD2, SNRPD3, SNRPE, SNRPF, SNRPG, DDX23, CD2BP2, PPIH, SNU13, EFTUD2, SART1 and USP39, plus LSM2, LSM3, LSM4, LSM5, LSM6, LSM7 and LSM8 (PubMed:26912367). LSM2, LSM3, LSM4, LSM5, LSM6, LSM7 and LSM8 form a heptameric, ring-shaped subcomplex (the LSM2-8 complex) that is part of the U4/U6-U5 tri-snRNP complex and the precatalytic spliceosome (PubMed:10523320, PubMed:26912367, PubMed:28781166).</text>
</comment>
<comment type="interaction">
    <interactant intactId="EBI-347779">
        <id>O95777</id>
    </interactant>
    <interactant intactId="EBI-25840379">
        <id>Q14203-5</id>
        <label>DCTN1</label>
    </interactant>
    <organismsDiffer>false</organismsDiffer>
    <experiments>3</experiments>
</comment>
<comment type="interaction">
    <interactant intactId="EBI-347779">
        <id>O95777</id>
    </interactant>
    <interactant intactId="EBI-466029">
        <id>P42858</id>
        <label>HTT</label>
    </interactant>
    <organismsDiffer>false</organismsDiffer>
    <experiments>15</experiments>
</comment>
<comment type="interaction">
    <interactant intactId="EBI-347779">
        <id>O95777</id>
    </interactant>
    <interactant intactId="EBI-347416">
        <id>Q9Y333</id>
        <label>LSM2</label>
    </interactant>
    <organismsDiffer>false</organismsDiffer>
    <experiments>8</experiments>
</comment>
<comment type="interaction">
    <interactant intactId="EBI-347779">
        <id>O95777</id>
    </interactant>
    <interactant intactId="EBI-348239">
        <id>P62310</id>
        <label>LSM3</label>
    </interactant>
    <organismsDiffer>false</organismsDiffer>
    <experiments>8</experiments>
</comment>
<comment type="interaction">
    <interactant intactId="EBI-347779">
        <id>O95777</id>
    </interactant>
    <interactant intactId="EBI-372521">
        <id>Q9Y4Z0</id>
        <label>LSM4</label>
    </interactant>
    <organismsDiffer>false</organismsDiffer>
    <experiments>6</experiments>
</comment>
<comment type="interaction">
    <interactant intactId="EBI-347779">
        <id>O95777</id>
    </interactant>
    <interactant intactId="EBI-373310">
        <id>P62312</id>
        <label>LSM6</label>
    </interactant>
    <organismsDiffer>false</organismsDiffer>
    <experiments>5</experiments>
</comment>
<comment type="interaction">
    <interactant intactId="EBI-347779">
        <id>O95777</id>
    </interactant>
    <interactant intactId="EBI-348372">
        <id>Q9UK45</id>
        <label>LSM7</label>
    </interactant>
    <organismsDiffer>false</organismsDiffer>
    <experiments>3</experiments>
</comment>
<comment type="interaction">
    <interactant intactId="EBI-347779">
        <id>O95777</id>
    </interactant>
    <interactant intactId="EBI-50433196">
        <id>A0A6Q8PF08</id>
        <label>PMP22</label>
    </interactant>
    <organismsDiffer>false</organismsDiffer>
    <experiments>3</experiments>
</comment>
<comment type="interaction">
    <interactant intactId="EBI-347779">
        <id>O95777</id>
    </interactant>
    <interactant intactId="EBI-21251460">
        <id>O60260-5</id>
        <label>PRKN</label>
    </interactant>
    <organismsDiffer>false</organismsDiffer>
    <experiments>6</experiments>
</comment>
<comment type="interaction">
    <interactant intactId="EBI-347779">
        <id>O95777</id>
    </interactant>
    <interactant intactId="EBI-985879">
        <id>P37840</id>
        <label>SNCA</label>
    </interactant>
    <organismsDiffer>false</organismsDiffer>
    <experiments>3</experiments>
</comment>
<comment type="interaction">
    <interactant intactId="EBI-347779">
        <id>O95777</id>
    </interactant>
    <interactant intactId="EBI-990792">
        <id>P00441</id>
        <label>SOD1</label>
    </interactant>
    <organismsDiffer>false</organismsDiffer>
    <experiments>3</experiments>
</comment>
<comment type="interaction">
    <interactant intactId="EBI-347779">
        <id>O95777</id>
    </interactant>
    <interactant intactId="EBI-372899">
        <id>Q13148</id>
        <label>TARDBP</label>
    </interactant>
    <organismsDiffer>false</organismsDiffer>
    <experiments>6</experiments>
</comment>
<comment type="interaction">
    <interactant intactId="EBI-347779">
        <id>O95777</id>
    </interactant>
    <interactant intactId="EBI-714860">
        <id>P09936</id>
        <label>UCHL1</label>
    </interactant>
    <organismsDiffer>false</organismsDiffer>
    <experiments>3</experiments>
</comment>
<comment type="subcellular location">
    <subcellularLocation>
        <location evidence="2 3 4">Nucleus</location>
    </subcellularLocation>
</comment>
<comment type="similarity">
    <text evidence="6">Belongs to the snRNP Sm proteins family.</text>
</comment>
<sequence>MTSALENYINRTVAVITSDGRMIVGTLKGFDQTINLILDESHERVFSSSQGVEQVVLGLYIVRGDNVAVIGEIDEETDSALDLGNIRAEPLNSVAH</sequence>
<proteinExistence type="evidence at protein level"/>
<evidence type="ECO:0000255" key="1">
    <source>
        <dbReference type="PROSITE-ProRule" id="PRU01346"/>
    </source>
</evidence>
<evidence type="ECO:0000269" key="2">
    <source>
    </source>
</evidence>
<evidence type="ECO:0000269" key="3">
    <source>
    </source>
</evidence>
<evidence type="ECO:0000269" key="4">
    <source>
    </source>
</evidence>
<evidence type="ECO:0000269" key="5">
    <source ref="4"/>
</evidence>
<evidence type="ECO:0000305" key="6"/>
<evidence type="ECO:0007744" key="7">
    <source>
        <dbReference type="PDB" id="3JCR"/>
    </source>
</evidence>
<evidence type="ECO:0007744" key="8">
    <source>
        <dbReference type="PDB" id="5O9Z"/>
    </source>
</evidence>
<evidence type="ECO:0007744" key="9">
    <source>
    </source>
</evidence>
<evidence type="ECO:0007744" key="10">
    <source>
    </source>
</evidence>
<dbReference type="EMBL" id="AF182294">
    <property type="protein sequence ID" value="AAD56232.1"/>
    <property type="molecule type" value="mRNA"/>
</dbReference>
<dbReference type="EMBL" id="AC006389">
    <property type="protein sequence ID" value="AAD15542.1"/>
    <property type="molecule type" value="Genomic_DNA"/>
</dbReference>
<dbReference type="EMBL" id="BC002742">
    <property type="protein sequence ID" value="AAH02742.1"/>
    <property type="molecule type" value="mRNA"/>
</dbReference>
<dbReference type="EMBL" id="BC022440">
    <property type="protein sequence ID" value="AAH22440.1"/>
    <property type="molecule type" value="mRNA"/>
</dbReference>
<dbReference type="CCDS" id="CCDS5775.1"/>
<dbReference type="RefSeq" id="NP_057284.1">
    <property type="nucleotide sequence ID" value="NM_016200.5"/>
</dbReference>
<dbReference type="PDB" id="3JCR">
    <property type="method" value="EM"/>
    <property type="resolution" value="7.00 A"/>
    <property type="chains" value="8=1-96"/>
</dbReference>
<dbReference type="PDB" id="5O9Z">
    <property type="method" value="EM"/>
    <property type="resolution" value="4.50 A"/>
    <property type="chains" value="u=1-96"/>
</dbReference>
<dbReference type="PDB" id="6AH0">
    <property type="method" value="EM"/>
    <property type="resolution" value="5.70 A"/>
    <property type="chains" value="z=1-96"/>
</dbReference>
<dbReference type="PDB" id="6AHD">
    <property type="method" value="EM"/>
    <property type="resolution" value="3.80 A"/>
    <property type="chains" value="z=1-96"/>
</dbReference>
<dbReference type="PDB" id="6QW6">
    <property type="method" value="EM"/>
    <property type="resolution" value="2.92 A"/>
    <property type="chains" value="68=1-96"/>
</dbReference>
<dbReference type="PDB" id="6QX9">
    <property type="method" value="EM"/>
    <property type="resolution" value="3.28 A"/>
    <property type="chains" value="68=1-96"/>
</dbReference>
<dbReference type="PDB" id="7ABG">
    <property type="method" value="EM"/>
    <property type="resolution" value="7.80 A"/>
    <property type="chains" value="A3=1-96"/>
</dbReference>
<dbReference type="PDB" id="8H6E">
    <property type="method" value="EM"/>
    <property type="resolution" value="3.20 A"/>
    <property type="chains" value="6g=1-96"/>
</dbReference>
<dbReference type="PDB" id="8H6J">
    <property type="method" value="EM"/>
    <property type="resolution" value="3.25 A"/>
    <property type="chains" value="6g=1-96"/>
</dbReference>
<dbReference type="PDB" id="8H6K">
    <property type="method" value="EM"/>
    <property type="resolution" value="2.70 A"/>
    <property type="chains" value="6g=1-96"/>
</dbReference>
<dbReference type="PDB" id="8H6L">
    <property type="method" value="EM"/>
    <property type="resolution" value="2.60 A"/>
    <property type="chains" value="6g=1-96"/>
</dbReference>
<dbReference type="PDB" id="8QO9">
    <property type="method" value="EM"/>
    <property type="resolution" value="5.29 A"/>
    <property type="chains" value="68=1-96"/>
</dbReference>
<dbReference type="PDB" id="8QXD">
    <property type="method" value="EM"/>
    <property type="resolution" value="9.60 A"/>
    <property type="chains" value="68=1-96"/>
</dbReference>
<dbReference type="PDB" id="8QZS">
    <property type="method" value="EM"/>
    <property type="resolution" value="4.10 A"/>
    <property type="chains" value="68=1-96"/>
</dbReference>
<dbReference type="PDB" id="8R08">
    <property type="method" value="EM"/>
    <property type="resolution" value="6.10 A"/>
    <property type="chains" value="68=1-96"/>
</dbReference>
<dbReference type="PDB" id="8R09">
    <property type="method" value="EM"/>
    <property type="resolution" value="4.30 A"/>
    <property type="chains" value="68=1-96"/>
</dbReference>
<dbReference type="PDB" id="8R0A">
    <property type="method" value="EM"/>
    <property type="resolution" value="5.80 A"/>
    <property type="chains" value="68=1-96"/>
</dbReference>
<dbReference type="PDB" id="8R0B">
    <property type="method" value="EM"/>
    <property type="resolution" value="4.40 A"/>
    <property type="chains" value="68=1-96"/>
</dbReference>
<dbReference type="PDB" id="8RM5">
    <property type="method" value="EM"/>
    <property type="resolution" value="6.90 A"/>
    <property type="chains" value="68=1-96"/>
</dbReference>
<dbReference type="PDBsum" id="3JCR"/>
<dbReference type="PDBsum" id="5O9Z"/>
<dbReference type="PDBsum" id="6AH0"/>
<dbReference type="PDBsum" id="6AHD"/>
<dbReference type="PDBsum" id="6QW6"/>
<dbReference type="PDBsum" id="6QX9"/>
<dbReference type="PDBsum" id="7ABG"/>
<dbReference type="PDBsum" id="8H6E"/>
<dbReference type="PDBsum" id="8H6J"/>
<dbReference type="PDBsum" id="8H6K"/>
<dbReference type="PDBsum" id="8H6L"/>
<dbReference type="PDBsum" id="8QO9"/>
<dbReference type="PDBsum" id="8QXD"/>
<dbReference type="PDBsum" id="8QZS"/>
<dbReference type="PDBsum" id="8R08"/>
<dbReference type="PDBsum" id="8R09"/>
<dbReference type="PDBsum" id="8R0A"/>
<dbReference type="PDBsum" id="8R0B"/>
<dbReference type="PDBsum" id="8RM5"/>
<dbReference type="EMDB" id="EMD-11695"/>
<dbReference type="EMDB" id="EMD-18529"/>
<dbReference type="EMDB" id="EMD-18718"/>
<dbReference type="EMDB" id="EMD-18781"/>
<dbReference type="EMDB" id="EMD-18786"/>
<dbReference type="EMDB" id="EMD-18787"/>
<dbReference type="EMDB" id="EMD-18788"/>
<dbReference type="EMDB" id="EMD-18789"/>
<dbReference type="EMDB" id="EMD-19349"/>
<dbReference type="EMDB" id="EMD-34500"/>
<dbReference type="EMDB" id="EMD-34505"/>
<dbReference type="EMDB" id="EMD-34507"/>
<dbReference type="EMDB" id="EMD-34508"/>
<dbReference type="EMDB" id="EMD-3766"/>
<dbReference type="EMDB" id="EMD-4658"/>
<dbReference type="EMDB" id="EMD-4665"/>
<dbReference type="EMDB" id="EMD-9621"/>
<dbReference type="EMDB" id="EMD-9624"/>
<dbReference type="SMR" id="O95777"/>
<dbReference type="BioGRID" id="119679">
    <property type="interactions" value="98"/>
</dbReference>
<dbReference type="ComplexPortal" id="CPX-2391">
    <property type="entry name" value="U4/U6.U5 small nuclear ribonucleoprotein complex"/>
</dbReference>
<dbReference type="CORUM" id="O95777"/>
<dbReference type="DIP" id="DIP-31195N"/>
<dbReference type="FunCoup" id="O95777">
    <property type="interactions" value="2084"/>
</dbReference>
<dbReference type="IntAct" id="O95777">
    <property type="interactions" value="68"/>
</dbReference>
<dbReference type="MINT" id="O95777"/>
<dbReference type="STRING" id="9606.ENSP00000249299"/>
<dbReference type="ChEMBL" id="CHEMBL5465283"/>
<dbReference type="GlyCosmos" id="O95777">
    <property type="glycosylation" value="1 site, 1 glycan"/>
</dbReference>
<dbReference type="GlyGen" id="O95777">
    <property type="glycosylation" value="1 site, 1 O-linked glycan (1 site)"/>
</dbReference>
<dbReference type="iPTMnet" id="O95777"/>
<dbReference type="PhosphoSitePlus" id="O95777"/>
<dbReference type="BioMuta" id="LSM8"/>
<dbReference type="jPOST" id="O95777"/>
<dbReference type="MassIVE" id="O95777"/>
<dbReference type="PaxDb" id="9606-ENSP00000249299"/>
<dbReference type="PeptideAtlas" id="O95777"/>
<dbReference type="ProteomicsDB" id="51040"/>
<dbReference type="Pumba" id="O95777"/>
<dbReference type="TopDownProteomics" id="O95777"/>
<dbReference type="Antibodypedia" id="17509">
    <property type="antibodies" value="62 antibodies from 22 providers"/>
</dbReference>
<dbReference type="DNASU" id="51691"/>
<dbReference type="Ensembl" id="ENST00000249299.7">
    <property type="protein sequence ID" value="ENSP00000249299.2"/>
    <property type="gene ID" value="ENSG00000128534.8"/>
</dbReference>
<dbReference type="GeneID" id="51691"/>
<dbReference type="KEGG" id="hsa:51691"/>
<dbReference type="MANE-Select" id="ENST00000249299.7">
    <property type="protein sequence ID" value="ENSP00000249299.2"/>
    <property type="RefSeq nucleotide sequence ID" value="NM_016200.5"/>
    <property type="RefSeq protein sequence ID" value="NP_057284.1"/>
</dbReference>
<dbReference type="UCSC" id="uc003vjg.4">
    <property type="organism name" value="human"/>
</dbReference>
<dbReference type="AGR" id="HGNC:20471"/>
<dbReference type="CTD" id="51691"/>
<dbReference type="GeneCards" id="LSM8"/>
<dbReference type="HGNC" id="HGNC:20471">
    <property type="gene designation" value="LSM8"/>
</dbReference>
<dbReference type="HPA" id="ENSG00000128534">
    <property type="expression patterns" value="Low tissue specificity"/>
</dbReference>
<dbReference type="MIM" id="607288">
    <property type="type" value="gene"/>
</dbReference>
<dbReference type="neXtProt" id="NX_O95777"/>
<dbReference type="OpenTargets" id="ENSG00000128534"/>
<dbReference type="PharmGKB" id="PA165618166"/>
<dbReference type="VEuPathDB" id="HostDB:ENSG00000128534"/>
<dbReference type="eggNOG" id="KOG1784">
    <property type="taxonomic scope" value="Eukaryota"/>
</dbReference>
<dbReference type="GeneTree" id="ENSGT00730000111212"/>
<dbReference type="InParanoid" id="O95777"/>
<dbReference type="OMA" id="AACDQTT"/>
<dbReference type="OrthoDB" id="10263346at2759"/>
<dbReference type="PAN-GO" id="O95777">
    <property type="GO annotations" value="5 GO annotations based on evolutionary models"/>
</dbReference>
<dbReference type="PhylomeDB" id="O95777"/>
<dbReference type="TreeFam" id="TF314555"/>
<dbReference type="PathwayCommons" id="O95777"/>
<dbReference type="Reactome" id="R-HSA-72163">
    <property type="pathway name" value="mRNA Splicing - Major Pathway"/>
</dbReference>
<dbReference type="SignaLink" id="O95777"/>
<dbReference type="SIGNOR" id="O95777"/>
<dbReference type="BioGRID-ORCS" id="51691">
    <property type="hits" value="397 hits in 548 CRISPR screens"/>
</dbReference>
<dbReference type="ChiTaRS" id="LSM8">
    <property type="organism name" value="human"/>
</dbReference>
<dbReference type="GeneWiki" id="LSM8"/>
<dbReference type="GenomeRNAi" id="51691"/>
<dbReference type="Pharos" id="O95777">
    <property type="development level" value="Tbio"/>
</dbReference>
<dbReference type="PRO" id="PR:O95777"/>
<dbReference type="Proteomes" id="UP000005640">
    <property type="component" value="Chromosome 7"/>
</dbReference>
<dbReference type="RNAct" id="O95777">
    <property type="molecule type" value="protein"/>
</dbReference>
<dbReference type="Bgee" id="ENSG00000128534">
    <property type="expression patterns" value="Expressed in calcaneal tendon and 201 other cell types or tissues"/>
</dbReference>
<dbReference type="ExpressionAtlas" id="O95777">
    <property type="expression patterns" value="baseline and differential"/>
</dbReference>
<dbReference type="GO" id="GO:0120115">
    <property type="term" value="C:Lsm2-8 complex"/>
    <property type="evidence" value="ECO:0000314"/>
    <property type="project" value="UniProtKB"/>
</dbReference>
<dbReference type="GO" id="GO:0005654">
    <property type="term" value="C:nucleoplasm"/>
    <property type="evidence" value="ECO:0000304"/>
    <property type="project" value="Reactome"/>
</dbReference>
<dbReference type="GO" id="GO:0005634">
    <property type="term" value="C:nucleus"/>
    <property type="evidence" value="ECO:0000314"/>
    <property type="project" value="UniProtKB"/>
</dbReference>
<dbReference type="GO" id="GO:0071011">
    <property type="term" value="C:precatalytic spliceosome"/>
    <property type="evidence" value="ECO:0000318"/>
    <property type="project" value="GO_Central"/>
</dbReference>
<dbReference type="GO" id="GO:0071005">
    <property type="term" value="C:U2-type precatalytic spliceosome"/>
    <property type="evidence" value="ECO:0000314"/>
    <property type="project" value="UniProtKB"/>
</dbReference>
<dbReference type="GO" id="GO:0046540">
    <property type="term" value="C:U4/U6 x U5 tri-snRNP complex"/>
    <property type="evidence" value="ECO:0000314"/>
    <property type="project" value="UniProtKB"/>
</dbReference>
<dbReference type="GO" id="GO:0005688">
    <property type="term" value="C:U6 snRNP"/>
    <property type="evidence" value="ECO:0000318"/>
    <property type="project" value="GO_Central"/>
</dbReference>
<dbReference type="GO" id="GO:0003729">
    <property type="term" value="F:mRNA binding"/>
    <property type="evidence" value="ECO:0000318"/>
    <property type="project" value="GO_Central"/>
</dbReference>
<dbReference type="GO" id="GO:0003723">
    <property type="term" value="F:RNA binding"/>
    <property type="evidence" value="ECO:0007005"/>
    <property type="project" value="UniProtKB"/>
</dbReference>
<dbReference type="GO" id="GO:0017070">
    <property type="term" value="F:U6 snRNA binding"/>
    <property type="evidence" value="ECO:0000303"/>
    <property type="project" value="UniProtKB"/>
</dbReference>
<dbReference type="GO" id="GO:0000398">
    <property type="term" value="P:mRNA splicing, via spliceosome"/>
    <property type="evidence" value="ECO:0000314"/>
    <property type="project" value="UniProtKB"/>
</dbReference>
<dbReference type="CDD" id="cd01727">
    <property type="entry name" value="LSm8"/>
    <property type="match status" value="1"/>
</dbReference>
<dbReference type="FunFam" id="2.30.30.100:FF:000022">
    <property type="entry name" value="U6 snRNA-associated Sm-like protein LSm8"/>
    <property type="match status" value="1"/>
</dbReference>
<dbReference type="Gene3D" id="2.30.30.100">
    <property type="match status" value="1"/>
</dbReference>
<dbReference type="InterPro" id="IPR034103">
    <property type="entry name" value="Lsm8"/>
</dbReference>
<dbReference type="InterPro" id="IPR010920">
    <property type="entry name" value="LSM_dom_sf"/>
</dbReference>
<dbReference type="InterPro" id="IPR044642">
    <property type="entry name" value="PTHR15588"/>
</dbReference>
<dbReference type="InterPro" id="IPR047575">
    <property type="entry name" value="Sm"/>
</dbReference>
<dbReference type="InterPro" id="IPR001163">
    <property type="entry name" value="Sm_dom_euk/arc"/>
</dbReference>
<dbReference type="PANTHER" id="PTHR15588">
    <property type="entry name" value="LSM1"/>
    <property type="match status" value="1"/>
</dbReference>
<dbReference type="PANTHER" id="PTHR15588:SF9">
    <property type="entry name" value="U6 SNRNA-ASSOCIATED SM-LIKE PROTEIN LSM8"/>
    <property type="match status" value="1"/>
</dbReference>
<dbReference type="Pfam" id="PF01423">
    <property type="entry name" value="LSM"/>
    <property type="match status" value="1"/>
</dbReference>
<dbReference type="SMART" id="SM00651">
    <property type="entry name" value="Sm"/>
    <property type="match status" value="1"/>
</dbReference>
<dbReference type="SUPFAM" id="SSF50182">
    <property type="entry name" value="Sm-like ribonucleoproteins"/>
    <property type="match status" value="1"/>
</dbReference>
<dbReference type="PROSITE" id="PS52002">
    <property type="entry name" value="SM"/>
    <property type="match status" value="1"/>
</dbReference>
<feature type="initiator methionine" description="Removed" evidence="5 9 10">
    <location>
        <position position="1"/>
    </location>
</feature>
<feature type="chain" id="PRO_0000125582" description="U6 snRNA-associated Sm-like protein LSm8">
    <location>
        <begin position="2"/>
        <end position="96"/>
    </location>
</feature>
<feature type="domain" description="Sm" evidence="1">
    <location>
        <begin position="1"/>
        <end position="76"/>
    </location>
</feature>
<feature type="modified residue" description="N-acetylthreonine" evidence="5 9 10">
    <location>
        <position position="2"/>
    </location>
</feature>